<keyword id="KW-0963">Cytoplasm</keyword>
<keyword id="KW-0378">Hydrolase</keyword>
<keyword id="KW-0460">Magnesium</keyword>
<keyword id="KW-0464">Manganese</keyword>
<keyword id="KW-0479">Metal-binding</keyword>
<keyword id="KW-0546">Nucleotide metabolism</keyword>
<keyword id="KW-0547">Nucleotide-binding</keyword>
<keyword id="KW-0539">Nucleus</keyword>
<keyword id="KW-1185">Reference proteome</keyword>
<accession>A4R1J6</accession>
<accession>G4MN11</accession>
<protein>
    <recommendedName>
        <fullName evidence="1">Inosine triphosphate pyrophosphatase</fullName>
        <shortName evidence="1">ITPase</shortName>
        <shortName evidence="1">Inosine triphosphatase</shortName>
        <ecNumber evidence="1">3.6.1.66</ecNumber>
    </recommendedName>
    <alternativeName>
        <fullName evidence="1">Non-canonical purine NTP pyrophosphatase</fullName>
    </alternativeName>
    <alternativeName>
        <fullName evidence="1">Non-standard purine NTP pyrophosphatase</fullName>
    </alternativeName>
    <alternativeName>
        <fullName evidence="1">Nucleoside-triphosphate diphosphatase</fullName>
    </alternativeName>
    <alternativeName>
        <fullName evidence="1">Nucleoside-triphosphate pyrophosphatase</fullName>
        <shortName evidence="1">NTPase</shortName>
    </alternativeName>
    <alternativeName>
        <fullName evidence="1">XTP/dITP diphosphatase</fullName>
    </alternativeName>
</protein>
<feature type="chain" id="PRO_0000413142" description="Inosine triphosphate pyrophosphatase">
    <location>
        <begin position="1"/>
        <end position="189"/>
    </location>
</feature>
<feature type="binding site" evidence="1">
    <location>
        <begin position="14"/>
        <end position="19"/>
    </location>
    <ligand>
        <name>ITP</name>
        <dbReference type="ChEBI" id="CHEBI:61402"/>
    </ligand>
</feature>
<feature type="binding site" evidence="1">
    <location>
        <position position="42"/>
    </location>
    <ligand>
        <name>Mg(2+)</name>
        <dbReference type="ChEBI" id="CHEBI:18420"/>
    </ligand>
</feature>
<feature type="binding site" evidence="1">
    <location>
        <position position="54"/>
    </location>
    <ligand>
        <name>ITP</name>
        <dbReference type="ChEBI" id="CHEBI:61402"/>
    </ligand>
</feature>
<feature type="binding site" evidence="1">
    <location>
        <begin position="70"/>
        <end position="71"/>
    </location>
    <ligand>
        <name>ITP</name>
        <dbReference type="ChEBI" id="CHEBI:61402"/>
    </ligand>
</feature>
<feature type="binding site" evidence="1">
    <location>
        <position position="87"/>
    </location>
    <ligand>
        <name>ITP</name>
        <dbReference type="ChEBI" id="CHEBI:61402"/>
    </ligand>
</feature>
<feature type="binding site" evidence="1">
    <location>
        <begin position="146"/>
        <end position="149"/>
    </location>
    <ligand>
        <name>ITP</name>
        <dbReference type="ChEBI" id="CHEBI:61402"/>
    </ligand>
</feature>
<feature type="binding site" evidence="1">
    <location>
        <position position="167"/>
    </location>
    <ligand>
        <name>ITP</name>
        <dbReference type="ChEBI" id="CHEBI:61402"/>
    </ligand>
</feature>
<feature type="binding site" evidence="1">
    <location>
        <begin position="172"/>
        <end position="173"/>
    </location>
    <ligand>
        <name>ITP</name>
        <dbReference type="ChEBI" id="CHEBI:61402"/>
    </ligand>
</feature>
<gene>
    <name type="ORF">MGG_06911</name>
</gene>
<name>ITPA_PYRO7</name>
<evidence type="ECO:0000255" key="1">
    <source>
        <dbReference type="HAMAP-Rule" id="MF_03148"/>
    </source>
</evidence>
<comment type="function">
    <text evidence="1">Pyrophosphatase that hydrolyzes non-canonical purine nucleotides such as inosine triphosphate (ITP), deoxyinosine triphosphate (dITP) or xanthosine 5'-triphosphate (XTP) to their respective monophosphate derivatives. The enzyme does not distinguish between the deoxy- and ribose forms. Probably excludes non-canonical purines from RNA and DNA precursor pools, thus preventing their incorporation into RNA and DNA and avoiding chromosomal lesions.</text>
</comment>
<comment type="catalytic activity">
    <reaction evidence="1">
        <text>ITP + H2O = IMP + diphosphate + H(+)</text>
        <dbReference type="Rhea" id="RHEA:29399"/>
        <dbReference type="ChEBI" id="CHEBI:15377"/>
        <dbReference type="ChEBI" id="CHEBI:15378"/>
        <dbReference type="ChEBI" id="CHEBI:33019"/>
        <dbReference type="ChEBI" id="CHEBI:58053"/>
        <dbReference type="ChEBI" id="CHEBI:61402"/>
        <dbReference type="EC" id="3.6.1.66"/>
    </reaction>
    <physiologicalReaction direction="left-to-right" evidence="1">
        <dbReference type="Rhea" id="RHEA:29400"/>
    </physiologicalReaction>
</comment>
<comment type="catalytic activity">
    <reaction evidence="1">
        <text>dITP + H2O = dIMP + diphosphate + H(+)</text>
        <dbReference type="Rhea" id="RHEA:28342"/>
        <dbReference type="ChEBI" id="CHEBI:15377"/>
        <dbReference type="ChEBI" id="CHEBI:15378"/>
        <dbReference type="ChEBI" id="CHEBI:33019"/>
        <dbReference type="ChEBI" id="CHEBI:61194"/>
        <dbReference type="ChEBI" id="CHEBI:61382"/>
        <dbReference type="EC" id="3.6.1.66"/>
    </reaction>
    <physiologicalReaction direction="left-to-right" evidence="1">
        <dbReference type="Rhea" id="RHEA:28343"/>
    </physiologicalReaction>
</comment>
<comment type="catalytic activity">
    <reaction evidence="1">
        <text>XTP + H2O = XMP + diphosphate + H(+)</text>
        <dbReference type="Rhea" id="RHEA:28610"/>
        <dbReference type="ChEBI" id="CHEBI:15377"/>
        <dbReference type="ChEBI" id="CHEBI:15378"/>
        <dbReference type="ChEBI" id="CHEBI:33019"/>
        <dbReference type="ChEBI" id="CHEBI:57464"/>
        <dbReference type="ChEBI" id="CHEBI:61314"/>
        <dbReference type="EC" id="3.6.1.66"/>
    </reaction>
    <physiologicalReaction direction="left-to-right" evidence="1">
        <dbReference type="Rhea" id="RHEA:28611"/>
    </physiologicalReaction>
</comment>
<comment type="cofactor">
    <cofactor evidence="1">
        <name>Mg(2+)</name>
        <dbReference type="ChEBI" id="CHEBI:18420"/>
    </cofactor>
    <cofactor evidence="1">
        <name>Mn(2+)</name>
        <dbReference type="ChEBI" id="CHEBI:29035"/>
    </cofactor>
    <text evidence="1">Binds 1 divalent metal cation per subunit; can use either Mg(2+) or Mn(2+).</text>
</comment>
<comment type="subunit">
    <text evidence="1">Homodimer.</text>
</comment>
<comment type="subcellular location">
    <subcellularLocation>
        <location evidence="1">Cytoplasm</location>
    </subcellularLocation>
    <subcellularLocation>
        <location evidence="1">Nucleus</location>
    </subcellularLocation>
</comment>
<comment type="similarity">
    <text evidence="1">Belongs to the HAM1 NTPase family.</text>
</comment>
<reference key="1">
    <citation type="journal article" date="2005" name="Nature">
        <title>The genome sequence of the rice blast fungus Magnaporthe grisea.</title>
        <authorList>
            <person name="Dean R.A."/>
            <person name="Talbot N.J."/>
            <person name="Ebbole D.J."/>
            <person name="Farman M.L."/>
            <person name="Mitchell T.K."/>
            <person name="Orbach M.J."/>
            <person name="Thon M.R."/>
            <person name="Kulkarni R."/>
            <person name="Xu J.-R."/>
            <person name="Pan H."/>
            <person name="Read N.D."/>
            <person name="Lee Y.-H."/>
            <person name="Carbone I."/>
            <person name="Brown D."/>
            <person name="Oh Y.Y."/>
            <person name="Donofrio N."/>
            <person name="Jeong J.S."/>
            <person name="Soanes D.M."/>
            <person name="Djonovic S."/>
            <person name="Kolomiets E."/>
            <person name="Rehmeyer C."/>
            <person name="Li W."/>
            <person name="Harding M."/>
            <person name="Kim S."/>
            <person name="Lebrun M.-H."/>
            <person name="Bohnert H."/>
            <person name="Coughlan S."/>
            <person name="Butler J."/>
            <person name="Calvo S.E."/>
            <person name="Ma L.-J."/>
            <person name="Nicol R."/>
            <person name="Purcell S."/>
            <person name="Nusbaum C."/>
            <person name="Galagan J.E."/>
            <person name="Birren B.W."/>
        </authorList>
    </citation>
    <scope>NUCLEOTIDE SEQUENCE [LARGE SCALE GENOMIC DNA]</scope>
    <source>
        <strain>70-15 / ATCC MYA-4617 / FGSC 8958</strain>
    </source>
</reference>
<sequence length="189" mass="20936">MTTSAPRKTVNFITGNQNKLAEVQAILEPTIEVQSQKLDLIEVQGTLEEVTLDKVRRAAEQVEGPVLVEDTCLCFNALKGLPGPYIKWFMESIGHDGLNNLLAAYEDKSAQAVCTFGYSAGPGSEPILFQGITEGKIVPPRGPPFFGWDAIFEYEGQTYAEMDKAEKNKISHRGKALEKLQAWFAQREN</sequence>
<proteinExistence type="inferred from homology"/>
<organism>
    <name type="scientific">Pyricularia oryzae (strain 70-15 / ATCC MYA-4617 / FGSC 8958)</name>
    <name type="common">Rice blast fungus</name>
    <name type="synonym">Magnaporthe oryzae</name>
    <dbReference type="NCBI Taxonomy" id="242507"/>
    <lineage>
        <taxon>Eukaryota</taxon>
        <taxon>Fungi</taxon>
        <taxon>Dikarya</taxon>
        <taxon>Ascomycota</taxon>
        <taxon>Pezizomycotina</taxon>
        <taxon>Sordariomycetes</taxon>
        <taxon>Sordariomycetidae</taxon>
        <taxon>Magnaporthales</taxon>
        <taxon>Pyriculariaceae</taxon>
        <taxon>Pyricularia</taxon>
    </lineage>
</organism>
<dbReference type="EC" id="3.6.1.66" evidence="1"/>
<dbReference type="EMBL" id="CM001231">
    <property type="protein sequence ID" value="EHA57033.1"/>
    <property type="molecule type" value="Genomic_DNA"/>
</dbReference>
<dbReference type="RefSeq" id="XP_003709645.1">
    <property type="nucleotide sequence ID" value="XM_003709597.1"/>
</dbReference>
<dbReference type="SMR" id="A4R1J6"/>
<dbReference type="FunCoup" id="A4R1J6">
    <property type="interactions" value="723"/>
</dbReference>
<dbReference type="STRING" id="242507.A4R1J6"/>
<dbReference type="EnsemblFungi" id="MGG_06911T0">
    <property type="protein sequence ID" value="MGG_06911T0"/>
    <property type="gene ID" value="MGG_06911"/>
</dbReference>
<dbReference type="GeneID" id="2685084"/>
<dbReference type="KEGG" id="mgr:MGG_06911"/>
<dbReference type="VEuPathDB" id="FungiDB:MGG_06911"/>
<dbReference type="eggNOG" id="KOG3222">
    <property type="taxonomic scope" value="Eukaryota"/>
</dbReference>
<dbReference type="HOGENOM" id="CLU_082080_1_1_1"/>
<dbReference type="InParanoid" id="A4R1J6"/>
<dbReference type="OMA" id="YDPIFQP"/>
<dbReference type="OrthoDB" id="6288734at2759"/>
<dbReference type="Proteomes" id="UP000009058">
    <property type="component" value="Chromosome 1"/>
</dbReference>
<dbReference type="GO" id="GO:0005737">
    <property type="term" value="C:cytoplasm"/>
    <property type="evidence" value="ECO:0007669"/>
    <property type="project" value="UniProtKB-SubCell"/>
</dbReference>
<dbReference type="GO" id="GO:0005634">
    <property type="term" value="C:nucleus"/>
    <property type="evidence" value="ECO:0007669"/>
    <property type="project" value="UniProtKB-SubCell"/>
</dbReference>
<dbReference type="GO" id="GO:0035870">
    <property type="term" value="F:dITP diphosphatase activity"/>
    <property type="evidence" value="ECO:0007669"/>
    <property type="project" value="RHEA"/>
</dbReference>
<dbReference type="GO" id="GO:0036220">
    <property type="term" value="F:ITP diphosphatase activity"/>
    <property type="evidence" value="ECO:0007669"/>
    <property type="project" value="RHEA"/>
</dbReference>
<dbReference type="GO" id="GO:0046872">
    <property type="term" value="F:metal ion binding"/>
    <property type="evidence" value="ECO:0007669"/>
    <property type="project" value="UniProtKB-KW"/>
</dbReference>
<dbReference type="GO" id="GO:0000166">
    <property type="term" value="F:nucleotide binding"/>
    <property type="evidence" value="ECO:0007669"/>
    <property type="project" value="UniProtKB-KW"/>
</dbReference>
<dbReference type="GO" id="GO:0036222">
    <property type="term" value="F:XTP diphosphatase activity"/>
    <property type="evidence" value="ECO:0007669"/>
    <property type="project" value="RHEA"/>
</dbReference>
<dbReference type="GO" id="GO:0009204">
    <property type="term" value="P:deoxyribonucleoside triphosphate catabolic process"/>
    <property type="evidence" value="ECO:0007669"/>
    <property type="project" value="UniProtKB-UniRule"/>
</dbReference>
<dbReference type="GO" id="GO:0009117">
    <property type="term" value="P:nucleotide metabolic process"/>
    <property type="evidence" value="ECO:0007669"/>
    <property type="project" value="UniProtKB-KW"/>
</dbReference>
<dbReference type="CDD" id="cd00515">
    <property type="entry name" value="HAM1"/>
    <property type="match status" value="1"/>
</dbReference>
<dbReference type="FunFam" id="3.90.950.10:FF:000003">
    <property type="entry name" value="Inosine triphosphate pyrophosphatase"/>
    <property type="match status" value="1"/>
</dbReference>
<dbReference type="Gene3D" id="3.90.950.10">
    <property type="match status" value="1"/>
</dbReference>
<dbReference type="HAMAP" id="MF_03148">
    <property type="entry name" value="HAM1_NTPase"/>
    <property type="match status" value="1"/>
</dbReference>
<dbReference type="InterPro" id="IPR027502">
    <property type="entry name" value="ITPase"/>
</dbReference>
<dbReference type="InterPro" id="IPR029001">
    <property type="entry name" value="ITPase-like_fam"/>
</dbReference>
<dbReference type="InterPro" id="IPR002637">
    <property type="entry name" value="RdgB/HAM1"/>
</dbReference>
<dbReference type="NCBIfam" id="TIGR00042">
    <property type="entry name" value="RdgB/HAM1 family non-canonical purine NTP pyrophosphatase"/>
    <property type="match status" value="1"/>
</dbReference>
<dbReference type="PANTHER" id="PTHR11067:SF9">
    <property type="entry name" value="INOSINE TRIPHOSPHATE PYROPHOSPHATASE"/>
    <property type="match status" value="1"/>
</dbReference>
<dbReference type="PANTHER" id="PTHR11067">
    <property type="entry name" value="INOSINE TRIPHOSPHATE PYROPHOSPHATASE/HAM1 PROTEIN"/>
    <property type="match status" value="1"/>
</dbReference>
<dbReference type="Pfam" id="PF01725">
    <property type="entry name" value="Ham1p_like"/>
    <property type="match status" value="1"/>
</dbReference>
<dbReference type="SUPFAM" id="SSF52972">
    <property type="entry name" value="ITPase-like"/>
    <property type="match status" value="1"/>
</dbReference>